<organism>
    <name type="scientific">Caldicellulosiruptor saccharolyticus (strain ATCC 43494 / DSM 8903 / Tp8T 6331)</name>
    <dbReference type="NCBI Taxonomy" id="351627"/>
    <lineage>
        <taxon>Bacteria</taxon>
        <taxon>Bacillati</taxon>
        <taxon>Bacillota</taxon>
        <taxon>Bacillota incertae sedis</taxon>
        <taxon>Caldicellulosiruptorales</taxon>
        <taxon>Caldicellulosiruptoraceae</taxon>
        <taxon>Caldicellulosiruptor</taxon>
    </lineage>
</organism>
<dbReference type="EC" id="2.4.2.17" evidence="1"/>
<dbReference type="EMBL" id="CP000679">
    <property type="protein sequence ID" value="ABP67611.1"/>
    <property type="molecule type" value="Genomic_DNA"/>
</dbReference>
<dbReference type="RefSeq" id="WP_011917546.1">
    <property type="nucleotide sequence ID" value="NC_009437.1"/>
</dbReference>
<dbReference type="SMR" id="A4XL26"/>
<dbReference type="STRING" id="351627.Csac_2026"/>
<dbReference type="KEGG" id="csc:Csac_2026"/>
<dbReference type="eggNOG" id="COG0040">
    <property type="taxonomic scope" value="Bacteria"/>
</dbReference>
<dbReference type="HOGENOM" id="CLU_038115_2_0_9"/>
<dbReference type="OrthoDB" id="9801867at2"/>
<dbReference type="UniPathway" id="UPA00031">
    <property type="reaction ID" value="UER00006"/>
</dbReference>
<dbReference type="Proteomes" id="UP000000256">
    <property type="component" value="Chromosome"/>
</dbReference>
<dbReference type="GO" id="GO:0005737">
    <property type="term" value="C:cytoplasm"/>
    <property type="evidence" value="ECO:0007669"/>
    <property type="project" value="UniProtKB-SubCell"/>
</dbReference>
<dbReference type="GO" id="GO:0005524">
    <property type="term" value="F:ATP binding"/>
    <property type="evidence" value="ECO:0007669"/>
    <property type="project" value="UniProtKB-KW"/>
</dbReference>
<dbReference type="GO" id="GO:0003879">
    <property type="term" value="F:ATP phosphoribosyltransferase activity"/>
    <property type="evidence" value="ECO:0007669"/>
    <property type="project" value="UniProtKB-UniRule"/>
</dbReference>
<dbReference type="GO" id="GO:0000105">
    <property type="term" value="P:L-histidine biosynthetic process"/>
    <property type="evidence" value="ECO:0007669"/>
    <property type="project" value="UniProtKB-UniRule"/>
</dbReference>
<dbReference type="CDD" id="cd13595">
    <property type="entry name" value="PBP2_HisGs"/>
    <property type="match status" value="1"/>
</dbReference>
<dbReference type="FunFam" id="3.40.190.10:FF:000008">
    <property type="entry name" value="ATP phosphoribosyltransferase"/>
    <property type="match status" value="1"/>
</dbReference>
<dbReference type="FunFam" id="3.40.190.10:FF:000011">
    <property type="entry name" value="ATP phosphoribosyltransferase"/>
    <property type="match status" value="1"/>
</dbReference>
<dbReference type="Gene3D" id="3.40.190.10">
    <property type="entry name" value="Periplasmic binding protein-like II"/>
    <property type="match status" value="2"/>
</dbReference>
<dbReference type="HAMAP" id="MF_01018">
    <property type="entry name" value="HisG_Short"/>
    <property type="match status" value="1"/>
</dbReference>
<dbReference type="InterPro" id="IPR013820">
    <property type="entry name" value="ATP_PRibTrfase_cat"/>
</dbReference>
<dbReference type="InterPro" id="IPR018198">
    <property type="entry name" value="ATP_PRibTrfase_CS"/>
</dbReference>
<dbReference type="InterPro" id="IPR001348">
    <property type="entry name" value="ATP_PRibTrfase_HisG"/>
</dbReference>
<dbReference type="InterPro" id="IPR024893">
    <property type="entry name" value="ATP_PRibTrfase_HisG_short"/>
</dbReference>
<dbReference type="NCBIfam" id="TIGR00070">
    <property type="entry name" value="hisG"/>
    <property type="match status" value="1"/>
</dbReference>
<dbReference type="PANTHER" id="PTHR21403:SF8">
    <property type="entry name" value="ATP PHOSPHORIBOSYLTRANSFERASE"/>
    <property type="match status" value="1"/>
</dbReference>
<dbReference type="PANTHER" id="PTHR21403">
    <property type="entry name" value="ATP PHOSPHORIBOSYLTRANSFERASE ATP-PRTASE"/>
    <property type="match status" value="1"/>
</dbReference>
<dbReference type="Pfam" id="PF01634">
    <property type="entry name" value="HisG"/>
    <property type="match status" value="1"/>
</dbReference>
<dbReference type="SUPFAM" id="SSF53850">
    <property type="entry name" value="Periplasmic binding protein-like II"/>
    <property type="match status" value="1"/>
</dbReference>
<dbReference type="PROSITE" id="PS01316">
    <property type="entry name" value="ATP_P_PHORIBOSYLTR"/>
    <property type="match status" value="1"/>
</dbReference>
<proteinExistence type="inferred from homology"/>
<accession>A4XL26</accession>
<feature type="chain" id="PRO_1000063277" description="ATP phosphoribosyltransferase">
    <location>
        <begin position="1"/>
        <end position="209"/>
    </location>
</feature>
<evidence type="ECO:0000255" key="1">
    <source>
        <dbReference type="HAMAP-Rule" id="MF_01018"/>
    </source>
</evidence>
<reference key="1">
    <citation type="submission" date="2007-04" db="EMBL/GenBank/DDBJ databases">
        <title>Genome sequence of the thermophilic hydrogen-producing bacterium Caldicellulosiruptor saccharolyticus DSM 8903.</title>
        <authorList>
            <person name="Copeland A."/>
            <person name="Lucas S."/>
            <person name="Lapidus A."/>
            <person name="Barry K."/>
            <person name="Detter J.C."/>
            <person name="Glavina del Rio T."/>
            <person name="Hammon N."/>
            <person name="Israni S."/>
            <person name="Dalin E."/>
            <person name="Tice H."/>
            <person name="Pitluck S."/>
            <person name="Kiss H."/>
            <person name="Brettin T."/>
            <person name="Bruce D."/>
            <person name="Han C."/>
            <person name="Schmutz J."/>
            <person name="Larimer F."/>
            <person name="Land M."/>
            <person name="Hauser L."/>
            <person name="Kyrpides N."/>
            <person name="Lykidis A."/>
            <person name="van de Werken H.J.G."/>
            <person name="Verhaart M.R.A."/>
            <person name="VanFossen A.L."/>
            <person name="Lewis D.L."/>
            <person name="Nichols J.D."/>
            <person name="Goorissen H.P."/>
            <person name="van Niel E.W.J."/>
            <person name="Stams F.J.M."/>
            <person name="Willquist K.U."/>
            <person name="Ward D.E."/>
            <person name="van der Oost J."/>
            <person name="Kelly R.M."/>
            <person name="Kengen S.M.W."/>
            <person name="Richardson P."/>
        </authorList>
    </citation>
    <scope>NUCLEOTIDE SEQUENCE [LARGE SCALE GENOMIC DNA]</scope>
    <source>
        <strain>ATCC 43494 / DSM 8903 / Tp8T 6331</strain>
    </source>
</reference>
<keyword id="KW-0028">Amino-acid biosynthesis</keyword>
<keyword id="KW-0067">ATP-binding</keyword>
<keyword id="KW-0963">Cytoplasm</keyword>
<keyword id="KW-0328">Glycosyltransferase</keyword>
<keyword id="KW-0368">Histidine biosynthesis</keyword>
<keyword id="KW-0547">Nucleotide-binding</keyword>
<keyword id="KW-0808">Transferase</keyword>
<comment type="function">
    <text evidence="1">Catalyzes the condensation of ATP and 5-phosphoribose 1-diphosphate to form N'-(5'-phosphoribosyl)-ATP (PR-ATP). Has a crucial role in the pathway because the rate of histidine biosynthesis seems to be controlled primarily by regulation of HisG enzymatic activity.</text>
</comment>
<comment type="catalytic activity">
    <reaction evidence="1">
        <text>1-(5-phospho-beta-D-ribosyl)-ATP + diphosphate = 5-phospho-alpha-D-ribose 1-diphosphate + ATP</text>
        <dbReference type="Rhea" id="RHEA:18473"/>
        <dbReference type="ChEBI" id="CHEBI:30616"/>
        <dbReference type="ChEBI" id="CHEBI:33019"/>
        <dbReference type="ChEBI" id="CHEBI:58017"/>
        <dbReference type="ChEBI" id="CHEBI:73183"/>
        <dbReference type="EC" id="2.4.2.17"/>
    </reaction>
</comment>
<comment type="pathway">
    <text evidence="1">Amino-acid biosynthesis; L-histidine biosynthesis; L-histidine from 5-phospho-alpha-D-ribose 1-diphosphate: step 1/9.</text>
</comment>
<comment type="subunit">
    <text evidence="1">Heteromultimer composed of HisG and HisZ subunits.</text>
</comment>
<comment type="subcellular location">
    <subcellularLocation>
        <location evidence="1">Cytoplasm</location>
    </subcellularLocation>
</comment>
<comment type="domain">
    <text>Lacks the C-terminal regulatory region which is replaced by HisZ.</text>
</comment>
<comment type="similarity">
    <text evidence="1">Belongs to the ATP phosphoribosyltransferase family. Short subfamily.</text>
</comment>
<sequence length="209" mass="23619">MVTIALPKGRLTEEATELFQRSSLISIDISQETRKLVLEDPRGNLRFLMVKPFDVPTYVEYGIADMGIVGKDVLLEVNKKVYELLDLKIGKCFIALAGPKGLREELLKKPEKIIATKFPNITKEYFENVLGEDVQIIKLNGSVELAPILGLSDMIVDIVESGRTLRENGLEVYEKLYDISARLIINRASLKLKREIEGIVNCLERMILQ</sequence>
<protein>
    <recommendedName>
        <fullName evidence="1">ATP phosphoribosyltransferase</fullName>
        <shortName evidence="1">ATP-PRT</shortName>
        <shortName evidence="1">ATP-PRTase</shortName>
        <ecNumber evidence="1">2.4.2.17</ecNumber>
    </recommendedName>
</protein>
<gene>
    <name evidence="1" type="primary">hisG</name>
    <name type="ordered locus">Csac_2026</name>
</gene>
<name>HIS1_CALS8</name>